<reference key="1">
    <citation type="journal article" date="2006" name="Proc. Natl. Acad. Sci. U.S.A.">
        <title>Molecular genetic anatomy of inter- and intraserotype variation in the human bacterial pathogen group A Streptococcus.</title>
        <authorList>
            <person name="Beres S.B."/>
            <person name="Richter E.W."/>
            <person name="Nagiec M.J."/>
            <person name="Sumby P."/>
            <person name="Porcella S.F."/>
            <person name="DeLeo F.R."/>
            <person name="Musser J.M."/>
        </authorList>
    </citation>
    <scope>NUCLEOTIDE SEQUENCE [LARGE SCALE GENOMIC DNA]</scope>
    <source>
        <strain>MGAS9429</strain>
    </source>
</reference>
<name>MUTL_STRPC</name>
<proteinExistence type="inferred from homology"/>
<protein>
    <recommendedName>
        <fullName evidence="1">DNA mismatch repair protein MutL</fullName>
    </recommendedName>
</protein>
<evidence type="ECO:0000255" key="1">
    <source>
        <dbReference type="HAMAP-Rule" id="MF_00149"/>
    </source>
</evidence>
<gene>
    <name evidence="1" type="primary">mutL</name>
    <name type="ordered locus">MGAS9429_Spy1815</name>
</gene>
<sequence length="660" mass="74357">MTNIIELPEVLANQIAAGEVVERPASVVKELVENAIDAKSSQITVEIEESGLKMIQVTDNGEGMSHEDLPLSLRRHATSKIKSQSDLFRIRTLGFRGEALPSVASISKITIKTATKEVTHGSLLIATGGEIETLEAISTPTGTKIKVENLFYNTPARLKYMKSLQAELAHIVDVVNRLSLAHPEVAFTLISDGRQLTQTSGTGDLRQAIAGIYGLNTTKKMLVISNADLDFEVSGYVSLPELTRANRNYMTILVNGRYIKNFLLNRAILDGYGSKLMVGRFPIVVIDIQIDPYLADVNVHPTKQEVRISKERELMALISTAISESLKEQDLIPDALENLAKSSTRHFSKPEQTQLPLQSRGLYYDPQKNDFFVKESAVSEKIPETDFYSGAVDNSVKVEKAELLPHSEEVIGPSSVKHASRPQNTFTETDHPNLDLKNRQKLSQMLNRLENEEQSVFPELDYFGQMHGTYLFAQGKDGLFIIDQHAAQERVKYEYYRDKIGDVDSSLQQLLVPYLFEFSGSDFINLQEKMALLNEVGIFLEVYGHNTFILREHPIWMKEEEIASGVYEMCDMLLLTNEVSIKTYRAELAIMMSCKRSIKANHSLDDYSARNLLLQLAQCQNPYNCPHGRPVLINFSKADMEKMFRRIQENHTSLRELGKY</sequence>
<keyword id="KW-0227">DNA damage</keyword>
<keyword id="KW-0234">DNA repair</keyword>
<feature type="chain" id="PRO_1000010092" description="DNA mismatch repair protein MutL">
    <location>
        <begin position="1"/>
        <end position="660"/>
    </location>
</feature>
<organism>
    <name type="scientific">Streptococcus pyogenes serotype M12 (strain MGAS9429)</name>
    <dbReference type="NCBI Taxonomy" id="370551"/>
    <lineage>
        <taxon>Bacteria</taxon>
        <taxon>Bacillati</taxon>
        <taxon>Bacillota</taxon>
        <taxon>Bacilli</taxon>
        <taxon>Lactobacillales</taxon>
        <taxon>Streptococcaceae</taxon>
        <taxon>Streptococcus</taxon>
    </lineage>
</organism>
<comment type="function">
    <text evidence="1">This protein is involved in the repair of mismatches in DNA. It is required for dam-dependent methyl-directed DNA mismatch repair. May act as a 'molecular matchmaker', a protein that promotes the formation of a stable complex between two or more DNA-binding proteins in an ATP-dependent manner without itself being part of a final effector complex.</text>
</comment>
<comment type="similarity">
    <text evidence="1">Belongs to the DNA mismatch repair MutL/HexB family.</text>
</comment>
<accession>Q1JJH1</accession>
<dbReference type="EMBL" id="CP000259">
    <property type="protein sequence ID" value="ABF33002.1"/>
    <property type="molecule type" value="Genomic_DNA"/>
</dbReference>
<dbReference type="RefSeq" id="WP_002991363.1">
    <property type="nucleotide sequence ID" value="NC_008021.1"/>
</dbReference>
<dbReference type="SMR" id="Q1JJH1"/>
<dbReference type="KEGG" id="spk:MGAS9429_Spy1815"/>
<dbReference type="HOGENOM" id="CLU_004131_4_1_9"/>
<dbReference type="Proteomes" id="UP000002433">
    <property type="component" value="Chromosome"/>
</dbReference>
<dbReference type="GO" id="GO:0032300">
    <property type="term" value="C:mismatch repair complex"/>
    <property type="evidence" value="ECO:0007669"/>
    <property type="project" value="InterPro"/>
</dbReference>
<dbReference type="GO" id="GO:0005524">
    <property type="term" value="F:ATP binding"/>
    <property type="evidence" value="ECO:0007669"/>
    <property type="project" value="InterPro"/>
</dbReference>
<dbReference type="GO" id="GO:0016887">
    <property type="term" value="F:ATP hydrolysis activity"/>
    <property type="evidence" value="ECO:0007669"/>
    <property type="project" value="InterPro"/>
</dbReference>
<dbReference type="GO" id="GO:0140664">
    <property type="term" value="F:ATP-dependent DNA damage sensor activity"/>
    <property type="evidence" value="ECO:0007669"/>
    <property type="project" value="InterPro"/>
</dbReference>
<dbReference type="GO" id="GO:0030983">
    <property type="term" value="F:mismatched DNA binding"/>
    <property type="evidence" value="ECO:0007669"/>
    <property type="project" value="InterPro"/>
</dbReference>
<dbReference type="GO" id="GO:0006298">
    <property type="term" value="P:mismatch repair"/>
    <property type="evidence" value="ECO:0007669"/>
    <property type="project" value="UniProtKB-UniRule"/>
</dbReference>
<dbReference type="CDD" id="cd16926">
    <property type="entry name" value="HATPase_MutL-MLH-PMS-like"/>
    <property type="match status" value="1"/>
</dbReference>
<dbReference type="CDD" id="cd00782">
    <property type="entry name" value="MutL_Trans"/>
    <property type="match status" value="1"/>
</dbReference>
<dbReference type="FunFam" id="3.30.1370.100:FF:000004">
    <property type="entry name" value="DNA mismatch repair endonuclease MutL"/>
    <property type="match status" value="1"/>
</dbReference>
<dbReference type="FunFam" id="3.30.565.10:FF:000003">
    <property type="entry name" value="DNA mismatch repair endonuclease MutL"/>
    <property type="match status" value="1"/>
</dbReference>
<dbReference type="Gene3D" id="3.30.230.10">
    <property type="match status" value="1"/>
</dbReference>
<dbReference type="Gene3D" id="3.30.565.10">
    <property type="entry name" value="Histidine kinase-like ATPase, C-terminal domain"/>
    <property type="match status" value="1"/>
</dbReference>
<dbReference type="Gene3D" id="3.30.1540.20">
    <property type="entry name" value="MutL, C-terminal domain, dimerisation subdomain"/>
    <property type="match status" value="1"/>
</dbReference>
<dbReference type="Gene3D" id="3.30.1370.100">
    <property type="entry name" value="MutL, C-terminal domain, regulatory subdomain"/>
    <property type="match status" value="1"/>
</dbReference>
<dbReference type="HAMAP" id="MF_00149">
    <property type="entry name" value="DNA_mis_repair"/>
    <property type="match status" value="1"/>
</dbReference>
<dbReference type="InterPro" id="IPR014762">
    <property type="entry name" value="DNA_mismatch_repair_CS"/>
</dbReference>
<dbReference type="InterPro" id="IPR020667">
    <property type="entry name" value="DNA_mismatch_repair_MutL"/>
</dbReference>
<dbReference type="InterPro" id="IPR013507">
    <property type="entry name" value="DNA_mismatch_S5_2-like"/>
</dbReference>
<dbReference type="InterPro" id="IPR036890">
    <property type="entry name" value="HATPase_C_sf"/>
</dbReference>
<dbReference type="InterPro" id="IPR002099">
    <property type="entry name" value="MutL/Mlh/PMS"/>
</dbReference>
<dbReference type="InterPro" id="IPR038973">
    <property type="entry name" value="MutL/Mlh/Pms-like"/>
</dbReference>
<dbReference type="InterPro" id="IPR014790">
    <property type="entry name" value="MutL_C"/>
</dbReference>
<dbReference type="InterPro" id="IPR042120">
    <property type="entry name" value="MutL_C_dimsub"/>
</dbReference>
<dbReference type="InterPro" id="IPR042121">
    <property type="entry name" value="MutL_C_regsub"/>
</dbReference>
<dbReference type="InterPro" id="IPR037198">
    <property type="entry name" value="MutL_C_sf"/>
</dbReference>
<dbReference type="InterPro" id="IPR020568">
    <property type="entry name" value="Ribosomal_Su5_D2-typ_SF"/>
</dbReference>
<dbReference type="InterPro" id="IPR014721">
    <property type="entry name" value="Ribsml_uS5_D2-typ_fold_subgr"/>
</dbReference>
<dbReference type="NCBIfam" id="TIGR00585">
    <property type="entry name" value="mutl"/>
    <property type="match status" value="1"/>
</dbReference>
<dbReference type="NCBIfam" id="NF000950">
    <property type="entry name" value="PRK00095.1-3"/>
    <property type="match status" value="1"/>
</dbReference>
<dbReference type="PANTHER" id="PTHR10073">
    <property type="entry name" value="DNA MISMATCH REPAIR PROTEIN MLH, PMS, MUTL"/>
    <property type="match status" value="1"/>
</dbReference>
<dbReference type="PANTHER" id="PTHR10073:SF12">
    <property type="entry name" value="DNA MISMATCH REPAIR PROTEIN MLH1"/>
    <property type="match status" value="1"/>
</dbReference>
<dbReference type="Pfam" id="PF01119">
    <property type="entry name" value="DNA_mis_repair"/>
    <property type="match status" value="1"/>
</dbReference>
<dbReference type="Pfam" id="PF13589">
    <property type="entry name" value="HATPase_c_3"/>
    <property type="match status" value="1"/>
</dbReference>
<dbReference type="Pfam" id="PF08676">
    <property type="entry name" value="MutL_C"/>
    <property type="match status" value="1"/>
</dbReference>
<dbReference type="SMART" id="SM01340">
    <property type="entry name" value="DNA_mis_repair"/>
    <property type="match status" value="1"/>
</dbReference>
<dbReference type="SMART" id="SM00853">
    <property type="entry name" value="MutL_C"/>
    <property type="match status" value="1"/>
</dbReference>
<dbReference type="SUPFAM" id="SSF55874">
    <property type="entry name" value="ATPase domain of HSP90 chaperone/DNA topoisomerase II/histidine kinase"/>
    <property type="match status" value="1"/>
</dbReference>
<dbReference type="SUPFAM" id="SSF118116">
    <property type="entry name" value="DNA mismatch repair protein MutL"/>
    <property type="match status" value="1"/>
</dbReference>
<dbReference type="SUPFAM" id="SSF54211">
    <property type="entry name" value="Ribosomal protein S5 domain 2-like"/>
    <property type="match status" value="1"/>
</dbReference>
<dbReference type="PROSITE" id="PS00058">
    <property type="entry name" value="DNA_MISMATCH_REPAIR_1"/>
    <property type="match status" value="1"/>
</dbReference>